<sequence length="260" mass="28394">MAQEPILTARGLVKRYGRVTALDRADFDLYPGEILAVIGDNGAGKSSMIKAISGAVTPDEGEIRLEGKPIQFRSPMEARQAGIETVYQNLALSPALSIADNMFLGREIRKPGIMGKWFRSLDRAAMEKQARAKLSELGLMTIQNINQAVETLSGGQRQGVAVARAAAFGSKVVIMDEPTAALGVKESRRVLELILDVRRRGLPIVLISHNMPHVFEVADRIHIHRLGRRLCVINPKDYTMSDAVAFMTGAKEPPREAIAA</sequence>
<organism>
    <name type="scientific">Rhizobium meliloti</name>
    <name type="common">Ensifer meliloti</name>
    <name type="synonym">Sinorhizobium meliloti</name>
    <dbReference type="NCBI Taxonomy" id="382"/>
    <lineage>
        <taxon>Bacteria</taxon>
        <taxon>Pseudomonadati</taxon>
        <taxon>Pseudomonadota</taxon>
        <taxon>Alphaproteobacteria</taxon>
        <taxon>Hyphomicrobiales</taxon>
        <taxon>Rhizobiaceae</taxon>
        <taxon>Sinorhizobium/Ensifer group</taxon>
        <taxon>Sinorhizobium</taxon>
    </lineage>
</organism>
<protein>
    <recommendedName>
        <fullName evidence="4">Fructose import ATP-binding protein FrcA</fullName>
        <ecNumber evidence="2">7.5.2.-</ecNumber>
    </recommendedName>
</protein>
<keyword id="KW-0067">ATP-binding</keyword>
<keyword id="KW-0997">Cell inner membrane</keyword>
<keyword id="KW-1003">Cell membrane</keyword>
<keyword id="KW-0472">Membrane</keyword>
<keyword id="KW-0547">Nucleotide-binding</keyword>
<keyword id="KW-0762">Sugar transport</keyword>
<keyword id="KW-1278">Translocase</keyword>
<keyword id="KW-0813">Transport</keyword>
<dbReference type="EC" id="7.5.2.-" evidence="2"/>
<dbReference type="EMBL" id="AF196574">
    <property type="protein sequence ID" value="AAG28500.1"/>
    <property type="molecule type" value="Genomic_DNA"/>
</dbReference>
<dbReference type="RefSeq" id="WP_003531508.1">
    <property type="nucleotide sequence ID" value="NZ_WISY01000026.1"/>
</dbReference>
<dbReference type="SMR" id="Q9F9B0"/>
<dbReference type="STRING" id="382.DU99_02555"/>
<dbReference type="TCDB" id="3.A.1.2.7">
    <property type="family name" value="the atp-binding cassette (abc) superfamily"/>
</dbReference>
<dbReference type="PATRIC" id="fig|382.52.peg.516"/>
<dbReference type="OMA" id="HMADLKI"/>
<dbReference type="GO" id="GO:0005886">
    <property type="term" value="C:plasma membrane"/>
    <property type="evidence" value="ECO:0007669"/>
    <property type="project" value="UniProtKB-SubCell"/>
</dbReference>
<dbReference type="GO" id="GO:0005524">
    <property type="term" value="F:ATP binding"/>
    <property type="evidence" value="ECO:0007669"/>
    <property type="project" value="UniProtKB-KW"/>
</dbReference>
<dbReference type="GO" id="GO:0016887">
    <property type="term" value="F:ATP hydrolysis activity"/>
    <property type="evidence" value="ECO:0007669"/>
    <property type="project" value="InterPro"/>
</dbReference>
<dbReference type="CDD" id="cd03216">
    <property type="entry name" value="ABC_Carb_Monos_I"/>
    <property type="match status" value="1"/>
</dbReference>
<dbReference type="Gene3D" id="3.40.50.300">
    <property type="entry name" value="P-loop containing nucleotide triphosphate hydrolases"/>
    <property type="match status" value="1"/>
</dbReference>
<dbReference type="InterPro" id="IPR003593">
    <property type="entry name" value="AAA+_ATPase"/>
</dbReference>
<dbReference type="InterPro" id="IPR050107">
    <property type="entry name" value="ABC_carbohydrate_import_ATPase"/>
</dbReference>
<dbReference type="InterPro" id="IPR003439">
    <property type="entry name" value="ABC_transporter-like_ATP-bd"/>
</dbReference>
<dbReference type="InterPro" id="IPR027417">
    <property type="entry name" value="P-loop_NTPase"/>
</dbReference>
<dbReference type="PANTHER" id="PTHR43790">
    <property type="entry name" value="CARBOHYDRATE TRANSPORT ATP-BINDING PROTEIN MG119-RELATED"/>
    <property type="match status" value="1"/>
</dbReference>
<dbReference type="PANTHER" id="PTHR43790:SF8">
    <property type="entry name" value="SUGAR ABC TRANSPORTER ATP-BINDING PROTEIN"/>
    <property type="match status" value="1"/>
</dbReference>
<dbReference type="Pfam" id="PF00005">
    <property type="entry name" value="ABC_tran"/>
    <property type="match status" value="1"/>
</dbReference>
<dbReference type="SMART" id="SM00382">
    <property type="entry name" value="AAA"/>
    <property type="match status" value="1"/>
</dbReference>
<dbReference type="SUPFAM" id="SSF52540">
    <property type="entry name" value="P-loop containing nucleoside triphosphate hydrolases"/>
    <property type="match status" value="1"/>
</dbReference>
<dbReference type="PROSITE" id="PS50893">
    <property type="entry name" value="ABC_TRANSPORTER_2"/>
    <property type="match status" value="1"/>
</dbReference>
<accession>Q9F9B0</accession>
<proteinExistence type="evidence at protein level"/>
<feature type="chain" id="PRO_0000439250" description="Fructose import ATP-binding protein FrcA">
    <location>
        <begin position="1"/>
        <end position="260"/>
    </location>
</feature>
<feature type="domain" description="ABC transporter" evidence="1">
    <location>
        <begin position="7"/>
        <end position="251"/>
    </location>
</feature>
<feature type="binding site" evidence="1">
    <location>
        <begin position="39"/>
        <end position="46"/>
    </location>
    <ligand>
        <name>ATP</name>
        <dbReference type="ChEBI" id="CHEBI:30616"/>
    </ligand>
</feature>
<gene>
    <name evidence="3" type="primary">frcA</name>
</gene>
<name>FRCA_RHIML</name>
<comment type="function">
    <text evidence="2 4">Part of the high-affinity ABC transporter complex FrcBCA involved in fructose uptake. Is also a high-affinity transporter for ribose and mannose (PubMed:11466273). Responsible for energy coupling to the transport system (Probable).</text>
</comment>
<comment type="catalytic activity">
    <reaction evidence="2">
        <text>D-fructose(out) + ATP + H2O = D-fructose(in) + ADP + phosphate + H(+)</text>
        <dbReference type="Rhea" id="RHEA:60180"/>
        <dbReference type="ChEBI" id="CHEBI:15377"/>
        <dbReference type="ChEBI" id="CHEBI:15378"/>
        <dbReference type="ChEBI" id="CHEBI:30616"/>
        <dbReference type="ChEBI" id="CHEBI:37721"/>
        <dbReference type="ChEBI" id="CHEBI:43474"/>
        <dbReference type="ChEBI" id="CHEBI:456216"/>
    </reaction>
    <physiologicalReaction direction="left-to-right" evidence="2">
        <dbReference type="Rhea" id="RHEA:60181"/>
    </physiologicalReaction>
</comment>
<comment type="subunit">
    <text evidence="5">The complex is composed of two ATP-binding proteins (FrcA), two transmembrane proteins (FrcC) and a solute-binding protein (FrcB).</text>
</comment>
<comment type="subcellular location">
    <subcellularLocation>
        <location evidence="4">Cell inner membrane</location>
        <topology evidence="4">Peripheral membrane protein</topology>
    </subcellularLocation>
</comment>
<comment type="similarity">
    <text evidence="4">Belongs to the ABC transporter superfamily.</text>
</comment>
<evidence type="ECO:0000255" key="1">
    <source>
        <dbReference type="PROSITE-ProRule" id="PRU00434"/>
    </source>
</evidence>
<evidence type="ECO:0000269" key="2">
    <source>
    </source>
</evidence>
<evidence type="ECO:0000303" key="3">
    <source>
    </source>
</evidence>
<evidence type="ECO:0000305" key="4"/>
<evidence type="ECO:0000305" key="5">
    <source>
    </source>
</evidence>
<reference key="1">
    <citation type="journal article" date="2001" name="J. Bacteriol.">
        <title>Fructose uptake in Sinorhizobium meliloti is mediated by a high-affinity ATP-binding cassette transport system.</title>
        <authorList>
            <person name="Lambert A."/>
            <person name="Osteras M."/>
            <person name="Mandon K."/>
            <person name="Poggi M.C."/>
            <person name="Le Rudulier D."/>
        </authorList>
    </citation>
    <scope>NUCLEOTIDE SEQUENCE [GENOMIC DNA]</scope>
    <scope>FUNCTION</scope>
    <scope>CATALYTIC ACTIVITY</scope>
    <scope>SUBUNIT</scope>
    <source>
        <strain>SU47 / Rm5000</strain>
    </source>
</reference>